<accession>B0SPA9</accession>
<evidence type="ECO:0000255" key="1">
    <source>
        <dbReference type="HAMAP-Rule" id="MF_00186"/>
    </source>
</evidence>
<feature type="chain" id="PRO_1000098740" description="Glycerol kinase">
    <location>
        <begin position="1"/>
        <end position="498"/>
    </location>
</feature>
<feature type="binding site" evidence="1">
    <location>
        <position position="14"/>
    </location>
    <ligand>
        <name>ADP</name>
        <dbReference type="ChEBI" id="CHEBI:456216"/>
    </ligand>
</feature>
<feature type="binding site" evidence="1">
    <location>
        <position position="14"/>
    </location>
    <ligand>
        <name>ATP</name>
        <dbReference type="ChEBI" id="CHEBI:30616"/>
    </ligand>
</feature>
<feature type="binding site" evidence="1">
    <location>
        <position position="14"/>
    </location>
    <ligand>
        <name>sn-glycerol 3-phosphate</name>
        <dbReference type="ChEBI" id="CHEBI:57597"/>
    </ligand>
</feature>
<feature type="binding site" evidence="1">
    <location>
        <position position="15"/>
    </location>
    <ligand>
        <name>ATP</name>
        <dbReference type="ChEBI" id="CHEBI:30616"/>
    </ligand>
</feature>
<feature type="binding site" evidence="1">
    <location>
        <position position="18"/>
    </location>
    <ligand>
        <name>ADP</name>
        <dbReference type="ChEBI" id="CHEBI:456216"/>
    </ligand>
</feature>
<feature type="binding site" evidence="1">
    <location>
        <position position="84"/>
    </location>
    <ligand>
        <name>glycerol</name>
        <dbReference type="ChEBI" id="CHEBI:17754"/>
    </ligand>
</feature>
<feature type="binding site" evidence="1">
    <location>
        <position position="84"/>
    </location>
    <ligand>
        <name>sn-glycerol 3-phosphate</name>
        <dbReference type="ChEBI" id="CHEBI:57597"/>
    </ligand>
</feature>
<feature type="binding site" evidence="1">
    <location>
        <position position="85"/>
    </location>
    <ligand>
        <name>glycerol</name>
        <dbReference type="ChEBI" id="CHEBI:17754"/>
    </ligand>
</feature>
<feature type="binding site" evidence="1">
    <location>
        <position position="85"/>
    </location>
    <ligand>
        <name>sn-glycerol 3-phosphate</name>
        <dbReference type="ChEBI" id="CHEBI:57597"/>
    </ligand>
</feature>
<feature type="binding site" evidence="1">
    <location>
        <position position="136"/>
    </location>
    <ligand>
        <name>glycerol</name>
        <dbReference type="ChEBI" id="CHEBI:17754"/>
    </ligand>
</feature>
<feature type="binding site" evidence="1">
    <location>
        <position position="136"/>
    </location>
    <ligand>
        <name>sn-glycerol 3-phosphate</name>
        <dbReference type="ChEBI" id="CHEBI:57597"/>
    </ligand>
</feature>
<feature type="binding site" evidence="1">
    <location>
        <position position="246"/>
    </location>
    <ligand>
        <name>glycerol</name>
        <dbReference type="ChEBI" id="CHEBI:17754"/>
    </ligand>
</feature>
<feature type="binding site" evidence="1">
    <location>
        <position position="246"/>
    </location>
    <ligand>
        <name>sn-glycerol 3-phosphate</name>
        <dbReference type="ChEBI" id="CHEBI:57597"/>
    </ligand>
</feature>
<feature type="binding site" evidence="1">
    <location>
        <position position="247"/>
    </location>
    <ligand>
        <name>glycerol</name>
        <dbReference type="ChEBI" id="CHEBI:17754"/>
    </ligand>
</feature>
<feature type="binding site" evidence="1">
    <location>
        <position position="268"/>
    </location>
    <ligand>
        <name>ADP</name>
        <dbReference type="ChEBI" id="CHEBI:456216"/>
    </ligand>
</feature>
<feature type="binding site" evidence="1">
    <location>
        <position position="268"/>
    </location>
    <ligand>
        <name>ATP</name>
        <dbReference type="ChEBI" id="CHEBI:30616"/>
    </ligand>
</feature>
<feature type="binding site" evidence="1">
    <location>
        <position position="311"/>
    </location>
    <ligand>
        <name>ADP</name>
        <dbReference type="ChEBI" id="CHEBI:456216"/>
    </ligand>
</feature>
<feature type="binding site" evidence="1">
    <location>
        <position position="311"/>
    </location>
    <ligand>
        <name>ATP</name>
        <dbReference type="ChEBI" id="CHEBI:30616"/>
    </ligand>
</feature>
<feature type="binding site" evidence="1">
    <location>
        <position position="315"/>
    </location>
    <ligand>
        <name>ATP</name>
        <dbReference type="ChEBI" id="CHEBI:30616"/>
    </ligand>
</feature>
<feature type="binding site" evidence="1">
    <location>
        <position position="412"/>
    </location>
    <ligand>
        <name>ADP</name>
        <dbReference type="ChEBI" id="CHEBI:456216"/>
    </ligand>
</feature>
<feature type="binding site" evidence="1">
    <location>
        <position position="412"/>
    </location>
    <ligand>
        <name>ATP</name>
        <dbReference type="ChEBI" id="CHEBI:30616"/>
    </ligand>
</feature>
<feature type="binding site" evidence="1">
    <location>
        <position position="416"/>
    </location>
    <ligand>
        <name>ADP</name>
        <dbReference type="ChEBI" id="CHEBI:456216"/>
    </ligand>
</feature>
<dbReference type="EC" id="2.7.1.30" evidence="1"/>
<dbReference type="EMBL" id="CP000786">
    <property type="protein sequence ID" value="ABZ97433.1"/>
    <property type="molecule type" value="Genomic_DNA"/>
</dbReference>
<dbReference type="RefSeq" id="WP_012388314.1">
    <property type="nucleotide sequence ID" value="NC_010602.1"/>
</dbReference>
<dbReference type="SMR" id="B0SPA9"/>
<dbReference type="STRING" id="456481.LEPBI_I1323"/>
<dbReference type="KEGG" id="lbi:LEPBI_I1323"/>
<dbReference type="HOGENOM" id="CLU_009281_2_3_12"/>
<dbReference type="OrthoDB" id="9805576at2"/>
<dbReference type="BioCyc" id="LBIF456481:LEPBI_RS06480-MONOMER"/>
<dbReference type="UniPathway" id="UPA00618">
    <property type="reaction ID" value="UER00672"/>
</dbReference>
<dbReference type="Proteomes" id="UP000001847">
    <property type="component" value="Chromosome I"/>
</dbReference>
<dbReference type="GO" id="GO:0005829">
    <property type="term" value="C:cytosol"/>
    <property type="evidence" value="ECO:0007669"/>
    <property type="project" value="TreeGrafter"/>
</dbReference>
<dbReference type="GO" id="GO:0005524">
    <property type="term" value="F:ATP binding"/>
    <property type="evidence" value="ECO:0007669"/>
    <property type="project" value="UniProtKB-UniRule"/>
</dbReference>
<dbReference type="GO" id="GO:0004370">
    <property type="term" value="F:glycerol kinase activity"/>
    <property type="evidence" value="ECO:0000250"/>
    <property type="project" value="UniProtKB"/>
</dbReference>
<dbReference type="GO" id="GO:0019563">
    <property type="term" value="P:glycerol catabolic process"/>
    <property type="evidence" value="ECO:0007669"/>
    <property type="project" value="UniProtKB-UniRule"/>
</dbReference>
<dbReference type="GO" id="GO:0006071">
    <property type="term" value="P:glycerol metabolic process"/>
    <property type="evidence" value="ECO:0000250"/>
    <property type="project" value="UniProtKB"/>
</dbReference>
<dbReference type="GO" id="GO:0006072">
    <property type="term" value="P:glycerol-3-phosphate metabolic process"/>
    <property type="evidence" value="ECO:0007669"/>
    <property type="project" value="InterPro"/>
</dbReference>
<dbReference type="CDD" id="cd07786">
    <property type="entry name" value="FGGY_EcGK_like"/>
    <property type="match status" value="1"/>
</dbReference>
<dbReference type="FunFam" id="3.30.420.40:FF:000007">
    <property type="entry name" value="Glycerol kinase"/>
    <property type="match status" value="1"/>
</dbReference>
<dbReference type="FunFam" id="3.30.420.40:FF:000008">
    <property type="entry name" value="Glycerol kinase"/>
    <property type="match status" value="1"/>
</dbReference>
<dbReference type="Gene3D" id="3.30.420.40">
    <property type="match status" value="2"/>
</dbReference>
<dbReference type="HAMAP" id="MF_00186">
    <property type="entry name" value="Glycerol_kin"/>
    <property type="match status" value="1"/>
</dbReference>
<dbReference type="InterPro" id="IPR043129">
    <property type="entry name" value="ATPase_NBD"/>
</dbReference>
<dbReference type="InterPro" id="IPR000577">
    <property type="entry name" value="Carb_kinase_FGGY"/>
</dbReference>
<dbReference type="InterPro" id="IPR018483">
    <property type="entry name" value="Carb_kinase_FGGY_CS"/>
</dbReference>
<dbReference type="InterPro" id="IPR018485">
    <property type="entry name" value="FGGY_C"/>
</dbReference>
<dbReference type="InterPro" id="IPR018484">
    <property type="entry name" value="FGGY_N"/>
</dbReference>
<dbReference type="InterPro" id="IPR005999">
    <property type="entry name" value="Glycerol_kin"/>
</dbReference>
<dbReference type="NCBIfam" id="TIGR01311">
    <property type="entry name" value="glycerol_kin"/>
    <property type="match status" value="1"/>
</dbReference>
<dbReference type="NCBIfam" id="NF000756">
    <property type="entry name" value="PRK00047.1"/>
    <property type="match status" value="1"/>
</dbReference>
<dbReference type="PANTHER" id="PTHR10196:SF69">
    <property type="entry name" value="GLYCEROL KINASE"/>
    <property type="match status" value="1"/>
</dbReference>
<dbReference type="PANTHER" id="PTHR10196">
    <property type="entry name" value="SUGAR KINASE"/>
    <property type="match status" value="1"/>
</dbReference>
<dbReference type="Pfam" id="PF02782">
    <property type="entry name" value="FGGY_C"/>
    <property type="match status" value="1"/>
</dbReference>
<dbReference type="Pfam" id="PF00370">
    <property type="entry name" value="FGGY_N"/>
    <property type="match status" value="1"/>
</dbReference>
<dbReference type="PIRSF" id="PIRSF000538">
    <property type="entry name" value="GlpK"/>
    <property type="match status" value="1"/>
</dbReference>
<dbReference type="SUPFAM" id="SSF53067">
    <property type="entry name" value="Actin-like ATPase domain"/>
    <property type="match status" value="2"/>
</dbReference>
<dbReference type="PROSITE" id="PS00933">
    <property type="entry name" value="FGGY_KINASES_1"/>
    <property type="match status" value="1"/>
</dbReference>
<reference key="1">
    <citation type="journal article" date="2008" name="PLoS ONE">
        <title>Genome sequence of the saprophyte Leptospira biflexa provides insights into the evolution of Leptospira and the pathogenesis of leptospirosis.</title>
        <authorList>
            <person name="Picardeau M."/>
            <person name="Bulach D.M."/>
            <person name="Bouchier C."/>
            <person name="Zuerner R.L."/>
            <person name="Zidane N."/>
            <person name="Wilson P.J."/>
            <person name="Creno S."/>
            <person name="Kuczek E.S."/>
            <person name="Bommezzadri S."/>
            <person name="Davis J.C."/>
            <person name="McGrath A."/>
            <person name="Johnson M.J."/>
            <person name="Boursaux-Eude C."/>
            <person name="Seemann T."/>
            <person name="Rouy Z."/>
            <person name="Coppel R.L."/>
            <person name="Rood J.I."/>
            <person name="Lajus A."/>
            <person name="Davies J.K."/>
            <person name="Medigue C."/>
            <person name="Adler B."/>
        </authorList>
    </citation>
    <scope>NUCLEOTIDE SEQUENCE [LARGE SCALE GENOMIC DNA]</scope>
    <source>
        <strain>Patoc 1 / ATCC 23582 / Paris</strain>
    </source>
</reference>
<proteinExistence type="inferred from homology"/>
<sequence length="498" mass="55700">MAKKNYIIGIDAGTTGIRTFCFNDKGKVISSAYQEFKQYYPKPGWVEHDPEEIWVKTQKLITLAIKNGKLNPKDAVAIGITNQRETSVVWDKKTGKPVYNAIVWQCRRTSDICKDLKKQSLDSNFRNKTGLVLDAYFSGTKIQWILDNVKGARDRAERGDLLFGTIDTWLLYKLTGHKEHKTDHTNASRTLLFNIQTKEWDEELCKILRVPMSMLPKAFNSKNLFGFTSNVKSIPDGIPISSLVGDQQGALFGQLCTEPGEAKNTYGTGCFLLFNVGDEFRISNQGLITTLALGPEGKTVYCLEGSVFIGGAVVQFLRDNLEFFKYSKDSEKLVKSIKTKDDIVFVPAFAGLGAPHWDQEARGAIFGLSRDTTPAQITRAALKAIALQSYELANAMEKETGKPLKFLRVDGGATSNAWLMQFQADILGTKVIRPQNVDTTVLGAAYLAGLERGFFKSVAHLRKEETKTTQFTPKMKESERKEEIDKWNLAISRVKTET</sequence>
<comment type="function">
    <text evidence="1">Key enzyme in the regulation of glycerol uptake and metabolism. Catalyzes the phosphorylation of glycerol to yield sn-glycerol 3-phosphate.</text>
</comment>
<comment type="catalytic activity">
    <reaction evidence="1">
        <text>glycerol + ATP = sn-glycerol 3-phosphate + ADP + H(+)</text>
        <dbReference type="Rhea" id="RHEA:21644"/>
        <dbReference type="ChEBI" id="CHEBI:15378"/>
        <dbReference type="ChEBI" id="CHEBI:17754"/>
        <dbReference type="ChEBI" id="CHEBI:30616"/>
        <dbReference type="ChEBI" id="CHEBI:57597"/>
        <dbReference type="ChEBI" id="CHEBI:456216"/>
        <dbReference type="EC" id="2.7.1.30"/>
    </reaction>
</comment>
<comment type="activity regulation">
    <text evidence="1">Inhibited by fructose 1,6-bisphosphate (FBP).</text>
</comment>
<comment type="pathway">
    <text evidence="1">Polyol metabolism; glycerol degradation via glycerol kinase pathway; sn-glycerol 3-phosphate from glycerol: step 1/1.</text>
</comment>
<comment type="similarity">
    <text evidence="1">Belongs to the FGGY kinase family.</text>
</comment>
<keyword id="KW-0067">ATP-binding</keyword>
<keyword id="KW-0319">Glycerol metabolism</keyword>
<keyword id="KW-0418">Kinase</keyword>
<keyword id="KW-0547">Nucleotide-binding</keyword>
<keyword id="KW-1185">Reference proteome</keyword>
<keyword id="KW-0808">Transferase</keyword>
<gene>
    <name evidence="1" type="primary">glpK</name>
    <name type="ordered locus">LEPBI_I1323</name>
</gene>
<name>GLPK_LEPBP</name>
<protein>
    <recommendedName>
        <fullName evidence="1">Glycerol kinase</fullName>
        <ecNumber evidence="1">2.7.1.30</ecNumber>
    </recommendedName>
    <alternativeName>
        <fullName evidence="1">ATP:glycerol 3-phosphotransferase</fullName>
    </alternativeName>
    <alternativeName>
        <fullName evidence="1">Glycerokinase</fullName>
        <shortName evidence="1">GK</shortName>
    </alternativeName>
</protein>
<organism>
    <name type="scientific">Leptospira biflexa serovar Patoc (strain Patoc 1 / ATCC 23582 / Paris)</name>
    <dbReference type="NCBI Taxonomy" id="456481"/>
    <lineage>
        <taxon>Bacteria</taxon>
        <taxon>Pseudomonadati</taxon>
        <taxon>Spirochaetota</taxon>
        <taxon>Spirochaetia</taxon>
        <taxon>Leptospirales</taxon>
        <taxon>Leptospiraceae</taxon>
        <taxon>Leptospira</taxon>
    </lineage>
</organism>